<protein>
    <recommendedName>
        <fullName evidence="1">tRNA N6-adenosine threonylcarbamoyltransferase</fullName>
        <ecNumber evidence="1">2.3.1.234</ecNumber>
    </recommendedName>
    <alternativeName>
        <fullName evidence="1">N6-L-threonylcarbamoyladenine synthase</fullName>
        <shortName evidence="1">t(6)A synthase</shortName>
    </alternativeName>
    <alternativeName>
        <fullName evidence="1">t(6)A37 threonylcarbamoyladenosine biosynthesis protein TsaD</fullName>
    </alternativeName>
    <alternativeName>
        <fullName evidence="1">tRNA threonylcarbamoyladenosine biosynthesis protein TsaD</fullName>
    </alternativeName>
</protein>
<reference key="1">
    <citation type="journal article" date="2011" name="Stand. Genomic Sci.">
        <title>Complete genome sequence of the halophilic and highly halotolerant Chromohalobacter salexigens type strain (1H11(T)).</title>
        <authorList>
            <person name="Copeland A."/>
            <person name="O'Connor K."/>
            <person name="Lucas S."/>
            <person name="Lapidus A."/>
            <person name="Berry K.W."/>
            <person name="Detter J.C."/>
            <person name="Del Rio T.G."/>
            <person name="Hammon N."/>
            <person name="Dalin E."/>
            <person name="Tice H."/>
            <person name="Pitluck S."/>
            <person name="Bruce D."/>
            <person name="Goodwin L."/>
            <person name="Han C."/>
            <person name="Tapia R."/>
            <person name="Saunders E."/>
            <person name="Schmutz J."/>
            <person name="Brettin T."/>
            <person name="Larimer F."/>
            <person name="Land M."/>
            <person name="Hauser L."/>
            <person name="Vargas C."/>
            <person name="Nieto J.J."/>
            <person name="Kyrpides N.C."/>
            <person name="Ivanova N."/>
            <person name="Goker M."/>
            <person name="Klenk H.P."/>
            <person name="Csonka L.N."/>
            <person name="Woyke T."/>
        </authorList>
    </citation>
    <scope>NUCLEOTIDE SEQUENCE [LARGE SCALE GENOMIC DNA]</scope>
    <source>
        <strain>ATCC BAA-138 / DSM 3043 / CIP 106854 / NCIMB 13768 / 1H11</strain>
    </source>
</reference>
<gene>
    <name evidence="1" type="primary">tsaD</name>
    <name type="synonym">gcp</name>
    <name type="ordered locus">Csal_0973</name>
</gene>
<comment type="function">
    <text evidence="1">Required for the formation of a threonylcarbamoyl group on adenosine at position 37 (t(6)A37) in tRNAs that read codons beginning with adenine. Is involved in the transfer of the threonylcarbamoyl moiety of threonylcarbamoyl-AMP (TC-AMP) to the N6 group of A37, together with TsaE and TsaB. TsaD likely plays a direct catalytic role in this reaction.</text>
</comment>
<comment type="catalytic activity">
    <reaction evidence="1">
        <text>L-threonylcarbamoyladenylate + adenosine(37) in tRNA = N(6)-L-threonylcarbamoyladenosine(37) in tRNA + AMP + H(+)</text>
        <dbReference type="Rhea" id="RHEA:37059"/>
        <dbReference type="Rhea" id="RHEA-COMP:10162"/>
        <dbReference type="Rhea" id="RHEA-COMP:10163"/>
        <dbReference type="ChEBI" id="CHEBI:15378"/>
        <dbReference type="ChEBI" id="CHEBI:73682"/>
        <dbReference type="ChEBI" id="CHEBI:74411"/>
        <dbReference type="ChEBI" id="CHEBI:74418"/>
        <dbReference type="ChEBI" id="CHEBI:456215"/>
        <dbReference type="EC" id="2.3.1.234"/>
    </reaction>
</comment>
<comment type="cofactor">
    <cofactor evidence="1">
        <name>Fe(2+)</name>
        <dbReference type="ChEBI" id="CHEBI:29033"/>
    </cofactor>
    <text evidence="1">Binds 1 Fe(2+) ion per subunit.</text>
</comment>
<comment type="subcellular location">
    <subcellularLocation>
        <location evidence="1">Cytoplasm</location>
    </subcellularLocation>
</comment>
<comment type="similarity">
    <text evidence="1">Belongs to the KAE1 / TsaD family.</text>
</comment>
<sequence length="343" mass="36932">MRVLGIETSCDETGVAIYDTERGLIADALHSQMAMHAEFGGVVPELASRDHTRKLLPLIRQVLDDAELRGDQLDAIAYTAGPGLVGALMVGASTAHGLARAWDIPALGVHHMEGHLLAPMLEAAPPDFPFVALLVSGGHTQLVEVHGLGRYRLLGESVDDAAGEAFDKAAKMLELPYPGGPHVAQLAERGDPTRFRFPRPMTDRPGLDFSFSGLKTHTLTTANQLKAAGPLSDQDRADIARAFEEAVVDTLVIKCRRALDTTGLKRLVVAGGVSANHRLRERLDRETAKRQAQAFYPRGRFCTDNGAMIAYVGAQRLLAGERDDATMQATPRWPLASLTPPAA</sequence>
<keyword id="KW-0012">Acyltransferase</keyword>
<keyword id="KW-0963">Cytoplasm</keyword>
<keyword id="KW-0408">Iron</keyword>
<keyword id="KW-0479">Metal-binding</keyword>
<keyword id="KW-1185">Reference proteome</keyword>
<keyword id="KW-0808">Transferase</keyword>
<keyword id="KW-0819">tRNA processing</keyword>
<accession>Q1QYX8</accession>
<proteinExistence type="inferred from homology"/>
<dbReference type="EC" id="2.3.1.234" evidence="1"/>
<dbReference type="EMBL" id="CP000285">
    <property type="protein sequence ID" value="ABE58330.1"/>
    <property type="molecule type" value="Genomic_DNA"/>
</dbReference>
<dbReference type="RefSeq" id="WP_011506276.1">
    <property type="nucleotide sequence ID" value="NC_007963.1"/>
</dbReference>
<dbReference type="SMR" id="Q1QYX8"/>
<dbReference type="STRING" id="290398.Csal_0973"/>
<dbReference type="GeneID" id="95333728"/>
<dbReference type="KEGG" id="csa:Csal_0973"/>
<dbReference type="eggNOG" id="COG0533">
    <property type="taxonomic scope" value="Bacteria"/>
</dbReference>
<dbReference type="HOGENOM" id="CLU_023208_0_2_6"/>
<dbReference type="OrthoDB" id="9806197at2"/>
<dbReference type="Proteomes" id="UP000000239">
    <property type="component" value="Chromosome"/>
</dbReference>
<dbReference type="GO" id="GO:0005737">
    <property type="term" value="C:cytoplasm"/>
    <property type="evidence" value="ECO:0007669"/>
    <property type="project" value="UniProtKB-SubCell"/>
</dbReference>
<dbReference type="GO" id="GO:0005506">
    <property type="term" value="F:iron ion binding"/>
    <property type="evidence" value="ECO:0007669"/>
    <property type="project" value="UniProtKB-UniRule"/>
</dbReference>
<dbReference type="GO" id="GO:0061711">
    <property type="term" value="F:N(6)-L-threonylcarbamoyladenine synthase activity"/>
    <property type="evidence" value="ECO:0007669"/>
    <property type="project" value="UniProtKB-EC"/>
</dbReference>
<dbReference type="GO" id="GO:0002949">
    <property type="term" value="P:tRNA threonylcarbamoyladenosine modification"/>
    <property type="evidence" value="ECO:0007669"/>
    <property type="project" value="UniProtKB-UniRule"/>
</dbReference>
<dbReference type="CDD" id="cd24133">
    <property type="entry name" value="ASKHA_NBD_TsaD_bac"/>
    <property type="match status" value="1"/>
</dbReference>
<dbReference type="FunFam" id="3.30.420.40:FF:000031">
    <property type="entry name" value="tRNA N6-adenosine threonylcarbamoyltransferase"/>
    <property type="match status" value="1"/>
</dbReference>
<dbReference type="Gene3D" id="3.30.420.40">
    <property type="match status" value="2"/>
</dbReference>
<dbReference type="HAMAP" id="MF_01445">
    <property type="entry name" value="TsaD"/>
    <property type="match status" value="1"/>
</dbReference>
<dbReference type="InterPro" id="IPR043129">
    <property type="entry name" value="ATPase_NBD"/>
</dbReference>
<dbReference type="InterPro" id="IPR000905">
    <property type="entry name" value="Gcp-like_dom"/>
</dbReference>
<dbReference type="InterPro" id="IPR017861">
    <property type="entry name" value="KAE1/TsaD"/>
</dbReference>
<dbReference type="InterPro" id="IPR022450">
    <property type="entry name" value="TsaD"/>
</dbReference>
<dbReference type="NCBIfam" id="TIGR00329">
    <property type="entry name" value="gcp_kae1"/>
    <property type="match status" value="1"/>
</dbReference>
<dbReference type="NCBIfam" id="TIGR03723">
    <property type="entry name" value="T6A_TsaD_YgjD"/>
    <property type="match status" value="1"/>
</dbReference>
<dbReference type="PANTHER" id="PTHR11735">
    <property type="entry name" value="TRNA N6-ADENOSINE THREONYLCARBAMOYLTRANSFERASE"/>
    <property type="match status" value="1"/>
</dbReference>
<dbReference type="PANTHER" id="PTHR11735:SF6">
    <property type="entry name" value="TRNA N6-ADENOSINE THREONYLCARBAMOYLTRANSFERASE, MITOCHONDRIAL"/>
    <property type="match status" value="1"/>
</dbReference>
<dbReference type="Pfam" id="PF00814">
    <property type="entry name" value="TsaD"/>
    <property type="match status" value="1"/>
</dbReference>
<dbReference type="PRINTS" id="PR00789">
    <property type="entry name" value="OSIALOPTASE"/>
</dbReference>
<dbReference type="SUPFAM" id="SSF53067">
    <property type="entry name" value="Actin-like ATPase domain"/>
    <property type="match status" value="2"/>
</dbReference>
<evidence type="ECO:0000255" key="1">
    <source>
        <dbReference type="HAMAP-Rule" id="MF_01445"/>
    </source>
</evidence>
<name>TSAD_CHRSD</name>
<organism>
    <name type="scientific">Chromohalobacter salexigens (strain ATCC BAA-138 / DSM 3043 / CIP 106854 / NCIMB 13768 / 1H11)</name>
    <dbReference type="NCBI Taxonomy" id="290398"/>
    <lineage>
        <taxon>Bacteria</taxon>
        <taxon>Pseudomonadati</taxon>
        <taxon>Pseudomonadota</taxon>
        <taxon>Gammaproteobacteria</taxon>
        <taxon>Oceanospirillales</taxon>
        <taxon>Halomonadaceae</taxon>
        <taxon>Chromohalobacter</taxon>
    </lineage>
</organism>
<feature type="chain" id="PRO_0000303326" description="tRNA N6-adenosine threonylcarbamoyltransferase">
    <location>
        <begin position="1"/>
        <end position="343"/>
    </location>
</feature>
<feature type="binding site" evidence="1">
    <location>
        <position position="111"/>
    </location>
    <ligand>
        <name>Fe cation</name>
        <dbReference type="ChEBI" id="CHEBI:24875"/>
    </ligand>
</feature>
<feature type="binding site" evidence="1">
    <location>
        <position position="115"/>
    </location>
    <ligand>
        <name>Fe cation</name>
        <dbReference type="ChEBI" id="CHEBI:24875"/>
    </ligand>
</feature>
<feature type="binding site" evidence="1">
    <location>
        <begin position="134"/>
        <end position="138"/>
    </location>
    <ligand>
        <name>substrate</name>
    </ligand>
</feature>
<feature type="binding site" evidence="1">
    <location>
        <position position="167"/>
    </location>
    <ligand>
        <name>substrate</name>
    </ligand>
</feature>
<feature type="binding site" evidence="1">
    <location>
        <position position="180"/>
    </location>
    <ligand>
        <name>substrate</name>
    </ligand>
</feature>
<feature type="binding site" evidence="1">
    <location>
        <position position="276"/>
    </location>
    <ligand>
        <name>substrate</name>
    </ligand>
</feature>
<feature type="binding site" evidence="1">
    <location>
        <position position="304"/>
    </location>
    <ligand>
        <name>Fe cation</name>
        <dbReference type="ChEBI" id="CHEBI:24875"/>
    </ligand>
</feature>